<sequence length="336" mass="37145">AGFAGDDAPRAVFPSIVGRPRHQGVMVGMGQKDAYVGDEAQSKRGILTLKYPIEHGIVSNWDDMEKIWHHTFYNELRVAPEEHPVLLTEAPLNPKANREKMTQIMFETFNVPAMYVAIQAVLSLYASGRTTGIVLDSGDGVSHTVPIYEGYALPHAILRLDLAGRGLTDYLMKILTERGYMFTTSAEREIVRDVKEKLAYVALDFEQELETAKSSSSVEKSYELPDGQVITIGAERFRCPEVLFQPSFIGMEAAGIHETTYNSIMKSDVDIRKDLYGNIVLSGGSTMFPGIADRMSKEITALAPSSMKIKVVAPPERKYSVWIGGSILASLSTFQQ</sequence>
<feature type="chain" id="PRO_0000089043" description="Actin-104">
    <location>
        <begin position="1" status="less than"/>
        <end position="336" status="greater than"/>
    </location>
</feature>
<feature type="non-terminal residue">
    <location>
        <position position="1"/>
    </location>
</feature>
<feature type="non-terminal residue">
    <location>
        <position position="336"/>
    </location>
</feature>
<protein>
    <recommendedName>
        <fullName>Actin-104</fullName>
        <ecNumber evidence="1">3.6.4.-</ecNumber>
    </recommendedName>
</protein>
<accession>P93375</accession>
<proteinExistence type="inferred from homology"/>
<name>ACT7_TOBAC</name>
<dbReference type="EC" id="3.6.4.-" evidence="1"/>
<dbReference type="EMBL" id="U60494">
    <property type="protein sequence ID" value="AAB40090.1"/>
    <property type="molecule type" value="Genomic_DNA"/>
</dbReference>
<dbReference type="SMR" id="P93375"/>
<dbReference type="STRING" id="4097.P93375"/>
<dbReference type="PaxDb" id="4097-P93375"/>
<dbReference type="Proteomes" id="UP000084051">
    <property type="component" value="Unplaced"/>
</dbReference>
<dbReference type="GO" id="GO:0015629">
    <property type="term" value="C:actin cytoskeleton"/>
    <property type="evidence" value="ECO:0000318"/>
    <property type="project" value="GO_Central"/>
</dbReference>
<dbReference type="GO" id="GO:0005737">
    <property type="term" value="C:cytoplasm"/>
    <property type="evidence" value="ECO:0007669"/>
    <property type="project" value="UniProtKB-KW"/>
</dbReference>
<dbReference type="GO" id="GO:0005524">
    <property type="term" value="F:ATP binding"/>
    <property type="evidence" value="ECO:0007669"/>
    <property type="project" value="UniProtKB-KW"/>
</dbReference>
<dbReference type="GO" id="GO:0016787">
    <property type="term" value="F:hydrolase activity"/>
    <property type="evidence" value="ECO:0007669"/>
    <property type="project" value="UniProtKB-KW"/>
</dbReference>
<dbReference type="CDD" id="cd10224">
    <property type="entry name" value="ASKHA_NBD_actin"/>
    <property type="match status" value="1"/>
</dbReference>
<dbReference type="FunFam" id="3.30.420.40:FF:000291">
    <property type="entry name" value="Actin, alpha skeletal muscle"/>
    <property type="match status" value="1"/>
</dbReference>
<dbReference type="FunFam" id="3.90.640.10:FF:000001">
    <property type="entry name" value="Actin, muscle"/>
    <property type="match status" value="1"/>
</dbReference>
<dbReference type="FunFam" id="3.30.420.40:FF:000404">
    <property type="entry name" value="Major actin"/>
    <property type="match status" value="1"/>
</dbReference>
<dbReference type="Gene3D" id="3.30.420.40">
    <property type="match status" value="2"/>
</dbReference>
<dbReference type="Gene3D" id="3.90.640.10">
    <property type="entry name" value="Actin, Chain A, domain 4"/>
    <property type="match status" value="1"/>
</dbReference>
<dbReference type="InterPro" id="IPR004000">
    <property type="entry name" value="Actin"/>
</dbReference>
<dbReference type="InterPro" id="IPR020902">
    <property type="entry name" value="Actin/actin-like_CS"/>
</dbReference>
<dbReference type="InterPro" id="IPR004001">
    <property type="entry name" value="Actin_CS"/>
</dbReference>
<dbReference type="InterPro" id="IPR043129">
    <property type="entry name" value="ATPase_NBD"/>
</dbReference>
<dbReference type="PANTHER" id="PTHR11937">
    <property type="entry name" value="ACTIN"/>
    <property type="match status" value="1"/>
</dbReference>
<dbReference type="Pfam" id="PF00022">
    <property type="entry name" value="Actin"/>
    <property type="match status" value="1"/>
</dbReference>
<dbReference type="PRINTS" id="PR00190">
    <property type="entry name" value="ACTIN"/>
</dbReference>
<dbReference type="SMART" id="SM00268">
    <property type="entry name" value="ACTIN"/>
    <property type="match status" value="1"/>
</dbReference>
<dbReference type="SUPFAM" id="SSF53067">
    <property type="entry name" value="Actin-like ATPase domain"/>
    <property type="match status" value="2"/>
</dbReference>
<dbReference type="PROSITE" id="PS00406">
    <property type="entry name" value="ACTINS_1"/>
    <property type="match status" value="1"/>
</dbReference>
<dbReference type="PROSITE" id="PS01132">
    <property type="entry name" value="ACTINS_ACT_LIKE"/>
    <property type="match status" value="1"/>
</dbReference>
<keyword id="KW-0067">ATP-binding</keyword>
<keyword id="KW-0963">Cytoplasm</keyword>
<keyword id="KW-0206">Cytoskeleton</keyword>
<keyword id="KW-0378">Hydrolase</keyword>
<keyword id="KW-0547">Nucleotide-binding</keyword>
<keyword id="KW-1185">Reference proteome</keyword>
<reference key="1">
    <citation type="journal article" date="1996" name="Mol. Biol. Evol.">
        <title>Phylogeny and substitution rates of angiosperm actin genes.</title>
        <authorList>
            <person name="Moniz de Sa M."/>
            <person name="Drouin G."/>
        </authorList>
    </citation>
    <scope>NUCLEOTIDE SEQUENCE [GENOMIC DNA]</scope>
</reference>
<comment type="function">
    <text>Actins are highly conserved proteins that are involved in various types of cell motility and are ubiquitously expressed in all eukaryotic cells. Essential component of cell cytoskeleton; plays an important role in cytoplasmic streaming, cell shape determination, cell division, organelle movement and extension growth.</text>
</comment>
<comment type="catalytic activity">
    <reaction evidence="1">
        <text>ATP + H2O = ADP + phosphate + H(+)</text>
        <dbReference type="Rhea" id="RHEA:13065"/>
        <dbReference type="ChEBI" id="CHEBI:15377"/>
        <dbReference type="ChEBI" id="CHEBI:15378"/>
        <dbReference type="ChEBI" id="CHEBI:30616"/>
        <dbReference type="ChEBI" id="CHEBI:43474"/>
        <dbReference type="ChEBI" id="CHEBI:456216"/>
    </reaction>
</comment>
<comment type="subcellular location">
    <subcellularLocation>
        <location>Cytoplasm</location>
        <location>Cytoskeleton</location>
    </subcellularLocation>
</comment>
<comment type="miscellaneous">
    <text>There are at least 7 different actin genes in tobacco.</text>
</comment>
<comment type="similarity">
    <text evidence="2">Belongs to the actin family.</text>
</comment>
<evidence type="ECO:0000250" key="1">
    <source>
        <dbReference type="UniProtKB" id="P68137"/>
    </source>
</evidence>
<evidence type="ECO:0000305" key="2"/>
<organism>
    <name type="scientific">Nicotiana tabacum</name>
    <name type="common">Common tobacco</name>
    <dbReference type="NCBI Taxonomy" id="4097"/>
    <lineage>
        <taxon>Eukaryota</taxon>
        <taxon>Viridiplantae</taxon>
        <taxon>Streptophyta</taxon>
        <taxon>Embryophyta</taxon>
        <taxon>Tracheophyta</taxon>
        <taxon>Spermatophyta</taxon>
        <taxon>Magnoliopsida</taxon>
        <taxon>eudicotyledons</taxon>
        <taxon>Gunneridae</taxon>
        <taxon>Pentapetalae</taxon>
        <taxon>asterids</taxon>
        <taxon>lamiids</taxon>
        <taxon>Solanales</taxon>
        <taxon>Solanaceae</taxon>
        <taxon>Nicotianoideae</taxon>
        <taxon>Nicotianeae</taxon>
        <taxon>Nicotiana</taxon>
    </lineage>
</organism>